<sequence length="359" mass="38834">MSKEKALESALSQIEKQFGKGAIMRLGDQEAAHDIDVIPSGIIALDVALGIGGYPKGRIIEIYGHESSGKTTLTLLAIAQCQKQGGTAAFVDAEHALDPKYAKLLGVDVDNLIVSQPDTGEQALEIADMLVRSGGVDIVVIDSVAALTPKAEIEGDMGDSHMGLQARLMSQALRKLTANIKRSNTLVIFINQIRMKIGVMFGNPETTTGGNALKFYSSVRLEVKKGGSIKDGIDVSGNEIKVKVVKNKVAPPFKQADFELIYGEGISLEAELIDLGAKYNIIEKSGAWYSYKGKKIGQGKEKSKEYLKENTAERDEIERAILELLLPNKYSNKDSNDSPKEGSKIKTKVNPAVTQDELI</sequence>
<feature type="chain" id="PRO_1000047920" description="Protein RecA">
    <location>
        <begin position="1"/>
        <end position="359"/>
    </location>
</feature>
<feature type="region of interest" description="Disordered" evidence="2">
    <location>
        <begin position="329"/>
        <end position="359"/>
    </location>
</feature>
<feature type="compositionally biased region" description="Basic and acidic residues" evidence="2">
    <location>
        <begin position="331"/>
        <end position="344"/>
    </location>
</feature>
<feature type="binding site" evidence="1">
    <location>
        <begin position="64"/>
        <end position="71"/>
    </location>
    <ligand>
        <name>ATP</name>
        <dbReference type="ChEBI" id="CHEBI:30616"/>
    </ligand>
</feature>
<keyword id="KW-0067">ATP-binding</keyword>
<keyword id="KW-0963">Cytoplasm</keyword>
<keyword id="KW-0227">DNA damage</keyword>
<keyword id="KW-0233">DNA recombination</keyword>
<keyword id="KW-0234">DNA repair</keyword>
<keyword id="KW-0238">DNA-binding</keyword>
<keyword id="KW-0547">Nucleotide-binding</keyword>
<keyword id="KW-0742">SOS response</keyword>
<gene>
    <name evidence="1" type="primary">recA</name>
    <name type="ordered locus">FTA_0014</name>
</gene>
<reference key="1">
    <citation type="journal article" date="2009" name="PLoS ONE">
        <title>Complete genome sequence of Francisella tularensis subspecies holarctica FTNF002-00.</title>
        <authorList>
            <person name="Barabote R.D."/>
            <person name="Xie G."/>
            <person name="Brettin T.S."/>
            <person name="Hinrichs S.H."/>
            <person name="Fey P.D."/>
            <person name="Jay J.J."/>
            <person name="Engle J.L."/>
            <person name="Godbole S.D."/>
            <person name="Noronha J.M."/>
            <person name="Scheuermann R.H."/>
            <person name="Zhou L.W."/>
            <person name="Lion C."/>
            <person name="Dempsey M.P."/>
        </authorList>
    </citation>
    <scope>NUCLEOTIDE SEQUENCE [LARGE SCALE GENOMIC DNA]</scope>
    <source>
        <strain>FTNF002-00 / FTA</strain>
    </source>
</reference>
<organism>
    <name type="scientific">Francisella tularensis subsp. holarctica (strain FTNF002-00 / FTA)</name>
    <dbReference type="NCBI Taxonomy" id="458234"/>
    <lineage>
        <taxon>Bacteria</taxon>
        <taxon>Pseudomonadati</taxon>
        <taxon>Pseudomonadota</taxon>
        <taxon>Gammaproteobacteria</taxon>
        <taxon>Thiotrichales</taxon>
        <taxon>Francisellaceae</taxon>
        <taxon>Francisella</taxon>
    </lineage>
</organism>
<dbReference type="EMBL" id="CP000803">
    <property type="protein sequence ID" value="ABU60492.1"/>
    <property type="molecule type" value="Genomic_DNA"/>
</dbReference>
<dbReference type="RefSeq" id="WP_003013734.1">
    <property type="nucleotide sequence ID" value="NC_009749.1"/>
</dbReference>
<dbReference type="SMR" id="A7N939"/>
<dbReference type="KEGG" id="fta:FTA_0014"/>
<dbReference type="HOGENOM" id="CLU_040469_3_2_6"/>
<dbReference type="GO" id="GO:0005829">
    <property type="term" value="C:cytosol"/>
    <property type="evidence" value="ECO:0007669"/>
    <property type="project" value="TreeGrafter"/>
</dbReference>
<dbReference type="GO" id="GO:0005524">
    <property type="term" value="F:ATP binding"/>
    <property type="evidence" value="ECO:0007669"/>
    <property type="project" value="UniProtKB-UniRule"/>
</dbReference>
<dbReference type="GO" id="GO:0016887">
    <property type="term" value="F:ATP hydrolysis activity"/>
    <property type="evidence" value="ECO:0007669"/>
    <property type="project" value="InterPro"/>
</dbReference>
<dbReference type="GO" id="GO:0140664">
    <property type="term" value="F:ATP-dependent DNA damage sensor activity"/>
    <property type="evidence" value="ECO:0007669"/>
    <property type="project" value="InterPro"/>
</dbReference>
<dbReference type="GO" id="GO:0003684">
    <property type="term" value="F:damaged DNA binding"/>
    <property type="evidence" value="ECO:0007669"/>
    <property type="project" value="UniProtKB-UniRule"/>
</dbReference>
<dbReference type="GO" id="GO:0003697">
    <property type="term" value="F:single-stranded DNA binding"/>
    <property type="evidence" value="ECO:0007669"/>
    <property type="project" value="UniProtKB-UniRule"/>
</dbReference>
<dbReference type="GO" id="GO:0006310">
    <property type="term" value="P:DNA recombination"/>
    <property type="evidence" value="ECO:0007669"/>
    <property type="project" value="UniProtKB-UniRule"/>
</dbReference>
<dbReference type="GO" id="GO:0006281">
    <property type="term" value="P:DNA repair"/>
    <property type="evidence" value="ECO:0007669"/>
    <property type="project" value="UniProtKB-UniRule"/>
</dbReference>
<dbReference type="GO" id="GO:0009432">
    <property type="term" value="P:SOS response"/>
    <property type="evidence" value="ECO:0007669"/>
    <property type="project" value="UniProtKB-UniRule"/>
</dbReference>
<dbReference type="CDD" id="cd00983">
    <property type="entry name" value="RecA"/>
    <property type="match status" value="1"/>
</dbReference>
<dbReference type="FunFam" id="3.40.50.300:FF:000087">
    <property type="entry name" value="Recombinase RecA"/>
    <property type="match status" value="1"/>
</dbReference>
<dbReference type="Gene3D" id="3.40.50.300">
    <property type="entry name" value="P-loop containing nucleotide triphosphate hydrolases"/>
    <property type="match status" value="1"/>
</dbReference>
<dbReference type="HAMAP" id="MF_00268">
    <property type="entry name" value="RecA"/>
    <property type="match status" value="1"/>
</dbReference>
<dbReference type="InterPro" id="IPR003593">
    <property type="entry name" value="AAA+_ATPase"/>
</dbReference>
<dbReference type="InterPro" id="IPR013765">
    <property type="entry name" value="DNA_recomb/repair_RecA"/>
</dbReference>
<dbReference type="InterPro" id="IPR020584">
    <property type="entry name" value="DNA_recomb/repair_RecA_CS"/>
</dbReference>
<dbReference type="InterPro" id="IPR027417">
    <property type="entry name" value="P-loop_NTPase"/>
</dbReference>
<dbReference type="InterPro" id="IPR049261">
    <property type="entry name" value="RecA-like_C"/>
</dbReference>
<dbReference type="InterPro" id="IPR049428">
    <property type="entry name" value="RecA-like_N"/>
</dbReference>
<dbReference type="InterPro" id="IPR020588">
    <property type="entry name" value="RecA_ATP-bd"/>
</dbReference>
<dbReference type="InterPro" id="IPR023400">
    <property type="entry name" value="RecA_C_sf"/>
</dbReference>
<dbReference type="InterPro" id="IPR020587">
    <property type="entry name" value="RecA_monomer-monomer_interface"/>
</dbReference>
<dbReference type="NCBIfam" id="TIGR02012">
    <property type="entry name" value="tigrfam_recA"/>
    <property type="match status" value="1"/>
</dbReference>
<dbReference type="PANTHER" id="PTHR45900:SF1">
    <property type="entry name" value="MITOCHONDRIAL DNA REPAIR PROTEIN RECA HOMOLOG-RELATED"/>
    <property type="match status" value="1"/>
</dbReference>
<dbReference type="PANTHER" id="PTHR45900">
    <property type="entry name" value="RECA"/>
    <property type="match status" value="1"/>
</dbReference>
<dbReference type="Pfam" id="PF00154">
    <property type="entry name" value="RecA"/>
    <property type="match status" value="1"/>
</dbReference>
<dbReference type="Pfam" id="PF21096">
    <property type="entry name" value="RecA_C"/>
    <property type="match status" value="1"/>
</dbReference>
<dbReference type="PRINTS" id="PR00142">
    <property type="entry name" value="RECA"/>
</dbReference>
<dbReference type="SMART" id="SM00382">
    <property type="entry name" value="AAA"/>
    <property type="match status" value="1"/>
</dbReference>
<dbReference type="SUPFAM" id="SSF52540">
    <property type="entry name" value="P-loop containing nucleoside triphosphate hydrolases"/>
    <property type="match status" value="1"/>
</dbReference>
<dbReference type="SUPFAM" id="SSF54752">
    <property type="entry name" value="RecA protein, C-terminal domain"/>
    <property type="match status" value="1"/>
</dbReference>
<dbReference type="PROSITE" id="PS00321">
    <property type="entry name" value="RECA_1"/>
    <property type="match status" value="1"/>
</dbReference>
<dbReference type="PROSITE" id="PS50162">
    <property type="entry name" value="RECA_2"/>
    <property type="match status" value="1"/>
</dbReference>
<dbReference type="PROSITE" id="PS50163">
    <property type="entry name" value="RECA_3"/>
    <property type="match status" value="1"/>
</dbReference>
<proteinExistence type="inferred from homology"/>
<evidence type="ECO:0000255" key="1">
    <source>
        <dbReference type="HAMAP-Rule" id="MF_00268"/>
    </source>
</evidence>
<evidence type="ECO:0000256" key="2">
    <source>
        <dbReference type="SAM" id="MobiDB-lite"/>
    </source>
</evidence>
<comment type="function">
    <text evidence="1">Can catalyze the hydrolysis of ATP in the presence of single-stranded DNA, the ATP-dependent uptake of single-stranded DNA by duplex DNA, and the ATP-dependent hybridization of homologous single-stranded DNAs. It interacts with LexA causing its activation and leading to its autocatalytic cleavage.</text>
</comment>
<comment type="subcellular location">
    <subcellularLocation>
        <location evidence="1">Cytoplasm</location>
    </subcellularLocation>
</comment>
<comment type="similarity">
    <text evidence="1">Belongs to the RecA family.</text>
</comment>
<accession>A7N939</accession>
<name>RECA_FRATF</name>
<protein>
    <recommendedName>
        <fullName evidence="1">Protein RecA</fullName>
    </recommendedName>
    <alternativeName>
        <fullName evidence="1">Recombinase A</fullName>
    </alternativeName>
</protein>